<reference key="1">
    <citation type="submission" date="2004-03" db="EMBL/GenBank/DDBJ databases">
        <title>Molecular evolution and phylogeny of Sipuculans hemerythrins.</title>
        <authorList>
            <person name="Vanin S."/>
            <person name="Negrisolo E."/>
            <person name="Bailly X."/>
            <person name="Bubacco L."/>
            <person name="Beltramini M."/>
            <person name="Salvato B."/>
        </authorList>
    </citation>
    <scope>NUCLEOTIDE SEQUENCE [MRNA] OF 2-114</scope>
</reference>
<comment type="function">
    <text evidence="1">Hemerythrin is a respiratory protein in blood cells of certain marine worms. The oxygen-binding site in each chain contains two iron atoms (By similarity).</text>
</comment>
<comment type="similarity">
    <text evidence="3">Belongs to the hemerythrin family.</text>
</comment>
<name>HEMT2_GOLVU</name>
<evidence type="ECO:0000250" key="1"/>
<evidence type="ECO:0000250" key="2">
    <source>
        <dbReference type="UniProtKB" id="P02244"/>
    </source>
</evidence>
<evidence type="ECO:0000305" key="3"/>
<sequence>MGFPIPDPYVWDPSFRIFYSIIDDEHKTLFNGIFHLGHDDSADNLAELRRCTGKHFLNEQVLMQDSQYAGYAEHVRAHDGFIHQLDNWHGDVKWAKNWLVNHIKTIDFKYKGKI</sequence>
<protein>
    <recommendedName>
        <fullName>Hemerythrin subunit 2</fullName>
        <shortName>Hr 2</shortName>
    </recommendedName>
</protein>
<proteinExistence type="inferred from homology"/>
<keyword id="KW-0408">Iron</keyword>
<keyword id="KW-0479">Metal-binding</keyword>
<keyword id="KW-0561">Oxygen transport</keyword>
<keyword id="KW-0813">Transport</keyword>
<organism>
    <name type="scientific">Golfingia vulgaris</name>
    <name type="common">Marine worm</name>
    <dbReference type="NCBI Taxonomy" id="210797"/>
    <lineage>
        <taxon>Eukaryota</taxon>
        <taxon>Metazoa</taxon>
        <taxon>Spiralia</taxon>
        <taxon>Lophotrochozoa</taxon>
        <taxon>Annelida</taxon>
        <taxon>Sipuncula</taxon>
        <taxon>Sipunculidea</taxon>
        <taxon>Golfingiida</taxon>
        <taxon>Golfingiidae</taxon>
        <taxon>Golfingia</taxon>
    </lineage>
</organism>
<accession>Q5K471</accession>
<feature type="chain" id="PRO_0000343353" description="Hemerythrin subunit 2">
    <location>
        <begin position="1"/>
        <end position="114"/>
    </location>
</feature>
<feature type="binding site" evidence="2">
    <location>
        <position position="26"/>
    </location>
    <ligand>
        <name>Fe cation</name>
        <dbReference type="ChEBI" id="CHEBI:24875"/>
        <label>1</label>
    </ligand>
</feature>
<feature type="binding site" evidence="2">
    <location>
        <position position="55"/>
    </location>
    <ligand>
        <name>Fe cation</name>
        <dbReference type="ChEBI" id="CHEBI:24875"/>
        <label>1</label>
    </ligand>
</feature>
<feature type="binding site" evidence="2">
    <location>
        <position position="59"/>
    </location>
    <ligand>
        <name>Fe cation</name>
        <dbReference type="ChEBI" id="CHEBI:24875"/>
        <label>1</label>
    </ligand>
</feature>
<feature type="binding site" evidence="2">
    <location>
        <position position="59"/>
    </location>
    <ligand>
        <name>Fe cation</name>
        <dbReference type="ChEBI" id="CHEBI:24875"/>
        <label>2</label>
    </ligand>
</feature>
<feature type="binding site" evidence="2">
    <location>
        <position position="74"/>
    </location>
    <ligand>
        <name>Fe cation</name>
        <dbReference type="ChEBI" id="CHEBI:24875"/>
        <label>2</label>
    </ligand>
</feature>
<feature type="binding site" evidence="2">
    <location>
        <position position="78"/>
    </location>
    <ligand>
        <name>Fe cation</name>
        <dbReference type="ChEBI" id="CHEBI:24875"/>
        <label>2</label>
    </ligand>
</feature>
<feature type="binding site" evidence="2">
    <location>
        <position position="102"/>
    </location>
    <ligand>
        <name>Fe cation</name>
        <dbReference type="ChEBI" id="CHEBI:24875"/>
        <label>2</label>
    </ligand>
</feature>
<feature type="binding site" evidence="2">
    <location>
        <position position="107"/>
    </location>
    <ligand>
        <name>Fe cation</name>
        <dbReference type="ChEBI" id="CHEBI:24875"/>
        <label>1</label>
    </ligand>
</feature>
<feature type="binding site" evidence="2">
    <location>
        <position position="107"/>
    </location>
    <ligand>
        <name>Fe cation</name>
        <dbReference type="ChEBI" id="CHEBI:24875"/>
        <label>2</label>
    </ligand>
</feature>
<dbReference type="EMBL" id="AJ632200">
    <property type="protein sequence ID" value="CAG14946.1"/>
    <property type="molecule type" value="mRNA"/>
</dbReference>
<dbReference type="SMR" id="Q5K471"/>
<dbReference type="GO" id="GO:0005506">
    <property type="term" value="F:iron ion binding"/>
    <property type="evidence" value="ECO:0007669"/>
    <property type="project" value="InterPro"/>
</dbReference>
<dbReference type="GO" id="GO:0005344">
    <property type="term" value="F:oxygen carrier activity"/>
    <property type="evidence" value="ECO:0007669"/>
    <property type="project" value="UniProtKB-KW"/>
</dbReference>
<dbReference type="Gene3D" id="1.20.120.50">
    <property type="entry name" value="Hemerythrin-like"/>
    <property type="match status" value="1"/>
</dbReference>
<dbReference type="InterPro" id="IPR002063">
    <property type="entry name" value="Haemerythrin"/>
</dbReference>
<dbReference type="InterPro" id="IPR016131">
    <property type="entry name" value="Haemerythrin_Fe_BS"/>
</dbReference>
<dbReference type="InterPro" id="IPR050669">
    <property type="entry name" value="Hemerythrin"/>
</dbReference>
<dbReference type="InterPro" id="IPR012312">
    <property type="entry name" value="Hemerythrin-like"/>
</dbReference>
<dbReference type="InterPro" id="IPR035938">
    <property type="entry name" value="Hemerythrin-like_sf"/>
</dbReference>
<dbReference type="NCBIfam" id="TIGR00058">
    <property type="entry name" value="Hemerythrin"/>
    <property type="match status" value="1"/>
</dbReference>
<dbReference type="PANTHER" id="PTHR37164">
    <property type="entry name" value="BACTERIOHEMERYTHRIN"/>
    <property type="match status" value="1"/>
</dbReference>
<dbReference type="PANTHER" id="PTHR37164:SF1">
    <property type="entry name" value="BACTERIOHEMERYTHRIN"/>
    <property type="match status" value="1"/>
</dbReference>
<dbReference type="Pfam" id="PF01814">
    <property type="entry name" value="Hemerythrin"/>
    <property type="match status" value="1"/>
</dbReference>
<dbReference type="PIRSF" id="PIRSF002033">
    <property type="entry name" value="Hemerythrin"/>
    <property type="match status" value="1"/>
</dbReference>
<dbReference type="PRINTS" id="PR00186">
    <property type="entry name" value="HEMERYTHRIN"/>
</dbReference>
<dbReference type="SUPFAM" id="SSF47188">
    <property type="entry name" value="Hemerythrin-like"/>
    <property type="match status" value="1"/>
</dbReference>
<dbReference type="PROSITE" id="PS00550">
    <property type="entry name" value="HEMERYTHRINS"/>
    <property type="match status" value="1"/>
</dbReference>